<organism>
    <name type="scientific">Macaca fascicularis</name>
    <name type="common">Crab-eating macaque</name>
    <name type="synonym">Cynomolgus monkey</name>
    <dbReference type="NCBI Taxonomy" id="9541"/>
    <lineage>
        <taxon>Eukaryota</taxon>
        <taxon>Metazoa</taxon>
        <taxon>Chordata</taxon>
        <taxon>Craniata</taxon>
        <taxon>Vertebrata</taxon>
        <taxon>Euteleostomi</taxon>
        <taxon>Mammalia</taxon>
        <taxon>Eutheria</taxon>
        <taxon>Euarchontoglires</taxon>
        <taxon>Primates</taxon>
        <taxon>Haplorrhini</taxon>
        <taxon>Catarrhini</taxon>
        <taxon>Cercopithecidae</taxon>
        <taxon>Cercopithecinae</taxon>
        <taxon>Macaca</taxon>
    </lineage>
</organism>
<name>ACY2_MACFA</name>
<reference key="1">
    <citation type="submission" date="2003-10" db="EMBL/GenBank/DDBJ databases">
        <title>Isolation and characterization of cDNA for macaque neurological disease genes.</title>
        <authorList>
            <person name="Kusuda J."/>
            <person name="Osada N."/>
            <person name="Tanuma R."/>
            <person name="Hirata M."/>
            <person name="Sugano S."/>
            <person name="Hashimoto K."/>
        </authorList>
    </citation>
    <scope>NUCLEOTIDE SEQUENCE [LARGE SCALE MRNA]</scope>
    <source>
        <tissue>Frontal cortex</tissue>
    </source>
</reference>
<evidence type="ECO:0000250" key="1"/>
<evidence type="ECO:0000305" key="2"/>
<proteinExistence type="evidence at transcript level"/>
<gene>
    <name type="primary">ASPA</name>
    <name type="ORF">QflA-19595</name>
</gene>
<protein>
    <recommendedName>
        <fullName>Aspartoacylase</fullName>
        <ecNumber>3.5.1.15</ecNumber>
    </recommendedName>
    <alternativeName>
        <fullName>Aminoacylase-2</fullName>
        <shortName>ACY-2</shortName>
    </alternativeName>
</protein>
<sequence length="313" mass="35658">MTSCHIAEEPIKKVAIFGGTHGNELTGVFLVKHWLENGAEIQRTGLEVKPFITNPRAVKKCTRYIDCDLNRIFDLENLGKKMSEDLPYEVRRAQEIYHLFGPKDGEDSYDIIFDLHNTTSNMGCTLILEDSRNNFLIQMFHYIKTSLAPLPCYVYLIEHPSLKYATTRSIAKCPVGIEVGPQPQGVLRADILDQMRKMIKHALDFIHHFNEGKEFPPCAIEVYKIIEKVDYPRDENGEIAAVIHPNLQDQDWKPLHPGDPMFLTLDGKTMPLGGDCTVYPVFVNEAAYYEKKEAFAKTTKLMLNAKSIRCSVH</sequence>
<comment type="function">
    <text evidence="1">Catalyzes the deacetylation of N-acetylaspartic acid (NAA) to produce acetate and L-aspartate. NAA occurs in high concentration in brain and its hydrolysis NAA plays a significant part in the maintenance of intact white matter. In other tissues it acts as a scavenger of NAA from body fluids (By similarity).</text>
</comment>
<comment type="catalytic activity">
    <reaction>
        <text>an N-acyl-L-aspartate + H2O = a carboxylate + L-aspartate</text>
        <dbReference type="Rhea" id="RHEA:10872"/>
        <dbReference type="ChEBI" id="CHEBI:15377"/>
        <dbReference type="ChEBI" id="CHEBI:29067"/>
        <dbReference type="ChEBI" id="CHEBI:29991"/>
        <dbReference type="ChEBI" id="CHEBI:58497"/>
        <dbReference type="EC" id="3.5.1.15"/>
    </reaction>
</comment>
<comment type="cofactor">
    <cofactor evidence="1">
        <name>Zn(2+)</name>
        <dbReference type="ChEBI" id="CHEBI:29105"/>
    </cofactor>
    <text evidence="1">Binds 1 zinc ion per subunit.</text>
</comment>
<comment type="subunit">
    <text evidence="1">Homodimer.</text>
</comment>
<comment type="subcellular location">
    <subcellularLocation>
        <location>Cytoplasm</location>
    </subcellularLocation>
    <subcellularLocation>
        <location evidence="1">Nucleus</location>
    </subcellularLocation>
</comment>
<comment type="similarity">
    <text evidence="2">Belongs to the AspA/AstE family. Aspartoacylase subfamily.</text>
</comment>
<keyword id="KW-0963">Cytoplasm</keyword>
<keyword id="KW-0378">Hydrolase</keyword>
<keyword id="KW-0479">Metal-binding</keyword>
<keyword id="KW-0539">Nucleus</keyword>
<keyword id="KW-1185">Reference proteome</keyword>
<keyword id="KW-0862">Zinc</keyword>
<dbReference type="EC" id="3.5.1.15"/>
<dbReference type="EMBL" id="AB125155">
    <property type="protein sequence ID" value="BAD51943.1"/>
    <property type="molecule type" value="mRNA"/>
</dbReference>
<dbReference type="RefSeq" id="NP_001271953.1">
    <property type="nucleotide sequence ID" value="NM_001285024.1"/>
</dbReference>
<dbReference type="SMR" id="Q60HH2"/>
<dbReference type="STRING" id="9541.ENSMFAP00000045153"/>
<dbReference type="eggNOG" id="ENOG502QRAK">
    <property type="taxonomic scope" value="Eukaryota"/>
</dbReference>
<dbReference type="Proteomes" id="UP000233100">
    <property type="component" value="Unplaced"/>
</dbReference>
<dbReference type="GO" id="GO:0005829">
    <property type="term" value="C:cytosol"/>
    <property type="evidence" value="ECO:0007669"/>
    <property type="project" value="TreeGrafter"/>
</dbReference>
<dbReference type="GO" id="GO:0005634">
    <property type="term" value="C:nucleus"/>
    <property type="evidence" value="ECO:0007669"/>
    <property type="project" value="UniProtKB-SubCell"/>
</dbReference>
<dbReference type="GO" id="GO:0019807">
    <property type="term" value="F:aspartoacylase activity"/>
    <property type="evidence" value="ECO:0007669"/>
    <property type="project" value="UniProtKB-EC"/>
</dbReference>
<dbReference type="GO" id="GO:0016788">
    <property type="term" value="F:hydrolase activity, acting on ester bonds"/>
    <property type="evidence" value="ECO:0007669"/>
    <property type="project" value="InterPro"/>
</dbReference>
<dbReference type="GO" id="GO:0046872">
    <property type="term" value="F:metal ion binding"/>
    <property type="evidence" value="ECO:0007669"/>
    <property type="project" value="UniProtKB-KW"/>
</dbReference>
<dbReference type="CDD" id="cd06909">
    <property type="entry name" value="M14_ASPA"/>
    <property type="match status" value="1"/>
</dbReference>
<dbReference type="FunFam" id="2.20.25.160:FF:000001">
    <property type="entry name" value="Aspartoacylase"/>
    <property type="match status" value="1"/>
</dbReference>
<dbReference type="FunFam" id="3.40.630.10:FF:000025">
    <property type="entry name" value="aspartoacylase"/>
    <property type="match status" value="1"/>
</dbReference>
<dbReference type="Gene3D" id="2.20.25.160">
    <property type="match status" value="1"/>
</dbReference>
<dbReference type="Gene3D" id="3.40.630.10">
    <property type="entry name" value="Zn peptidases"/>
    <property type="match status" value="1"/>
</dbReference>
<dbReference type="HAMAP" id="MF_00704">
    <property type="entry name" value="Aspartoacylase"/>
    <property type="match status" value="1"/>
</dbReference>
<dbReference type="InterPro" id="IPR050178">
    <property type="entry name" value="AspA/AstE_fam"/>
</dbReference>
<dbReference type="InterPro" id="IPR016708">
    <property type="entry name" value="Aspartoacylase"/>
</dbReference>
<dbReference type="InterPro" id="IPR055438">
    <property type="entry name" value="AstE_AspA_cat"/>
</dbReference>
<dbReference type="InterPro" id="IPR007036">
    <property type="entry name" value="Aste_AspA_hybrid_dom"/>
</dbReference>
<dbReference type="NCBIfam" id="NF002601">
    <property type="entry name" value="PRK02259.1"/>
    <property type="match status" value="1"/>
</dbReference>
<dbReference type="PANTHER" id="PTHR15162">
    <property type="entry name" value="ASPARTOACYLASE"/>
    <property type="match status" value="1"/>
</dbReference>
<dbReference type="PANTHER" id="PTHR15162:SF9">
    <property type="entry name" value="ASPARTOACYLASE"/>
    <property type="match status" value="1"/>
</dbReference>
<dbReference type="Pfam" id="PF24827">
    <property type="entry name" value="AstE_AspA_cat"/>
    <property type="match status" value="1"/>
</dbReference>
<dbReference type="Pfam" id="PF04952">
    <property type="entry name" value="AstE_AspA_hybrid"/>
    <property type="match status" value="1"/>
</dbReference>
<dbReference type="PIRSF" id="PIRSF018001">
    <property type="entry name" value="Aspartoacylase"/>
    <property type="match status" value="1"/>
</dbReference>
<dbReference type="SUPFAM" id="SSF53187">
    <property type="entry name" value="Zn-dependent exopeptidases"/>
    <property type="match status" value="1"/>
</dbReference>
<accession>Q60HH2</accession>
<feature type="chain" id="PRO_0000216872" description="Aspartoacylase">
    <location>
        <begin position="1"/>
        <end position="313"/>
    </location>
</feature>
<feature type="active site" evidence="1">
    <location>
        <position position="178"/>
    </location>
</feature>
<feature type="binding site" evidence="1">
    <location>
        <position position="21"/>
    </location>
    <ligand>
        <name>Zn(2+)</name>
        <dbReference type="ChEBI" id="CHEBI:29105"/>
    </ligand>
</feature>
<feature type="binding site" evidence="1">
    <location>
        <position position="24"/>
    </location>
    <ligand>
        <name>Zn(2+)</name>
        <dbReference type="ChEBI" id="CHEBI:29105"/>
    </ligand>
</feature>
<feature type="binding site" evidence="1">
    <location>
        <position position="63"/>
    </location>
    <ligand>
        <name>substrate</name>
    </ligand>
</feature>
<feature type="binding site" evidence="1">
    <location>
        <begin position="70"/>
        <end position="71"/>
    </location>
    <ligand>
        <name>substrate</name>
    </ligand>
</feature>
<feature type="binding site" evidence="1">
    <location>
        <position position="116"/>
    </location>
    <ligand>
        <name>Zn(2+)</name>
        <dbReference type="ChEBI" id="CHEBI:29105"/>
    </ligand>
</feature>
<feature type="binding site" evidence="1">
    <location>
        <begin position="164"/>
        <end position="168"/>
    </location>
    <ligand>
        <name>substrate</name>
    </ligand>
</feature>
<feature type="binding site" evidence="1">
    <location>
        <position position="178"/>
    </location>
    <ligand>
        <name>substrate</name>
    </ligand>
</feature>
<feature type="binding site" evidence="1">
    <location>
        <position position="288"/>
    </location>
    <ligand>
        <name>substrate</name>
    </ligand>
</feature>